<dbReference type="EMBL" id="CP001191">
    <property type="protein sequence ID" value="ACI53914.1"/>
    <property type="molecule type" value="Genomic_DNA"/>
</dbReference>
<dbReference type="RefSeq" id="WP_012556819.1">
    <property type="nucleotide sequence ID" value="NC_011369.1"/>
</dbReference>
<dbReference type="SMR" id="B5ZSW5"/>
<dbReference type="STRING" id="395492.Rleg2_0617"/>
<dbReference type="KEGG" id="rlt:Rleg2_0617"/>
<dbReference type="eggNOG" id="COG1678">
    <property type="taxonomic scope" value="Bacteria"/>
</dbReference>
<dbReference type="HOGENOM" id="CLU_057596_1_0_5"/>
<dbReference type="Proteomes" id="UP000008330">
    <property type="component" value="Chromosome"/>
</dbReference>
<dbReference type="GO" id="GO:0005829">
    <property type="term" value="C:cytosol"/>
    <property type="evidence" value="ECO:0007669"/>
    <property type="project" value="TreeGrafter"/>
</dbReference>
<dbReference type="Gene3D" id="3.40.1740.10">
    <property type="entry name" value="VC0467-like"/>
    <property type="match status" value="1"/>
</dbReference>
<dbReference type="HAMAP" id="MF_00758">
    <property type="entry name" value="UPF0301"/>
    <property type="match status" value="1"/>
</dbReference>
<dbReference type="InterPro" id="IPR003774">
    <property type="entry name" value="AlgH-like"/>
</dbReference>
<dbReference type="NCBIfam" id="NF001268">
    <property type="entry name" value="PRK00228.1-4"/>
    <property type="match status" value="1"/>
</dbReference>
<dbReference type="PANTHER" id="PTHR30327">
    <property type="entry name" value="UNCHARACTERIZED PROTEIN YQGE"/>
    <property type="match status" value="1"/>
</dbReference>
<dbReference type="PANTHER" id="PTHR30327:SF1">
    <property type="entry name" value="UPF0301 PROTEIN YQGE"/>
    <property type="match status" value="1"/>
</dbReference>
<dbReference type="Pfam" id="PF02622">
    <property type="entry name" value="DUF179"/>
    <property type="match status" value="1"/>
</dbReference>
<dbReference type="SUPFAM" id="SSF143456">
    <property type="entry name" value="VC0467-like"/>
    <property type="match status" value="1"/>
</dbReference>
<reference key="1">
    <citation type="journal article" date="2010" name="Stand. Genomic Sci.">
        <title>Complete genome sequence of Rhizobium leguminosarum bv trifolii strain WSM2304, an effective microsymbiont of the South American clover Trifolium polymorphum.</title>
        <authorList>
            <person name="Reeve W."/>
            <person name="O'Hara G."/>
            <person name="Chain P."/>
            <person name="Ardley J."/>
            <person name="Brau L."/>
            <person name="Nandesena K."/>
            <person name="Tiwari R."/>
            <person name="Malfatti S."/>
            <person name="Kiss H."/>
            <person name="Lapidus A."/>
            <person name="Copeland A."/>
            <person name="Nolan M."/>
            <person name="Land M."/>
            <person name="Ivanova N."/>
            <person name="Mavromatis K."/>
            <person name="Markowitz V."/>
            <person name="Kyrpides N."/>
            <person name="Melino V."/>
            <person name="Denton M."/>
            <person name="Yates R."/>
            <person name="Howieson J."/>
        </authorList>
    </citation>
    <scope>NUCLEOTIDE SEQUENCE [LARGE SCALE GENOMIC DNA]</scope>
    <source>
        <strain>WSM2304</strain>
    </source>
</reference>
<proteinExistence type="inferred from homology"/>
<sequence>MSLSTLKNRRERGFFDGQFLIAMPGIEDRNFARTVIYICAHSDAGAMGFVINRPQSLTFTDVLLHLDMIKQEDQIVLPQRARDFPIQTGGPVESGRGFVLHSDDYSSDSSIPVSDDICLTATLDIVRAISKGDGPTRATMLLGYSSWGAGQLENEVVNNGWLTCPANEELIFDRSLDDKYERALAGMGVTAAMLSAEAGHA</sequence>
<gene>
    <name type="ordered locus">Rleg2_0617</name>
</gene>
<keyword id="KW-1185">Reference proteome</keyword>
<evidence type="ECO:0000255" key="1">
    <source>
        <dbReference type="HAMAP-Rule" id="MF_00758"/>
    </source>
</evidence>
<name>Y617_RHILW</name>
<feature type="chain" id="PRO_1000198290" description="UPF0301 protein Rleg2_0617">
    <location>
        <begin position="1"/>
        <end position="201"/>
    </location>
</feature>
<accession>B5ZSW5</accession>
<organism>
    <name type="scientific">Rhizobium leguminosarum bv. trifolii (strain WSM2304)</name>
    <dbReference type="NCBI Taxonomy" id="395492"/>
    <lineage>
        <taxon>Bacteria</taxon>
        <taxon>Pseudomonadati</taxon>
        <taxon>Pseudomonadota</taxon>
        <taxon>Alphaproteobacteria</taxon>
        <taxon>Hyphomicrobiales</taxon>
        <taxon>Rhizobiaceae</taxon>
        <taxon>Rhizobium/Agrobacterium group</taxon>
        <taxon>Rhizobium</taxon>
    </lineage>
</organism>
<comment type="similarity">
    <text evidence="1">Belongs to the UPF0301 (AlgH) family.</text>
</comment>
<protein>
    <recommendedName>
        <fullName evidence="1">UPF0301 protein Rleg2_0617</fullName>
    </recommendedName>
</protein>